<comment type="catalytic activity">
    <reaction>
        <text>D-glucose + NAD(+) = D-glucono-1,5-lactone + NADH + H(+)</text>
        <dbReference type="Rhea" id="RHEA:14293"/>
        <dbReference type="ChEBI" id="CHEBI:4167"/>
        <dbReference type="ChEBI" id="CHEBI:15378"/>
        <dbReference type="ChEBI" id="CHEBI:16217"/>
        <dbReference type="ChEBI" id="CHEBI:57540"/>
        <dbReference type="ChEBI" id="CHEBI:57945"/>
        <dbReference type="EC" id="1.1.1.47"/>
    </reaction>
</comment>
<comment type="catalytic activity">
    <reaction>
        <text>D-glucose + NADP(+) = D-glucono-1,5-lactone + NADPH + H(+)</text>
        <dbReference type="Rhea" id="RHEA:14405"/>
        <dbReference type="ChEBI" id="CHEBI:4167"/>
        <dbReference type="ChEBI" id="CHEBI:15378"/>
        <dbReference type="ChEBI" id="CHEBI:16217"/>
        <dbReference type="ChEBI" id="CHEBI:57783"/>
        <dbReference type="ChEBI" id="CHEBI:58349"/>
        <dbReference type="EC" id="1.1.1.47"/>
    </reaction>
</comment>
<comment type="subunit">
    <text evidence="2">Homotetramer.</text>
</comment>
<comment type="developmental stage">
    <text>Expressed during sporulation.</text>
</comment>
<comment type="similarity">
    <text evidence="4">Belongs to the short-chain dehydrogenases/reductases (SDR) family.</text>
</comment>
<keyword id="KW-0002">3D-structure</keyword>
<keyword id="KW-0903">Direct protein sequencing</keyword>
<keyword id="KW-0521">NADP</keyword>
<keyword id="KW-0560">Oxidoreductase</keyword>
<keyword id="KW-0749">Sporulation</keyword>
<protein>
    <recommendedName>
        <fullName>Glucose 1-dehydrogenase</fullName>
        <ecNumber>1.1.1.47</ecNumber>
    </recommendedName>
</protein>
<proteinExistence type="evidence at protein level"/>
<reference key="1">
    <citation type="journal article" date="1989" name="J. Biol. Chem.">
        <title>Stability-increasing mutants of glucose dehydrogenase from Bacillus megaterium IWG3.</title>
        <authorList>
            <person name="Makino Y."/>
            <person name="Negoro S."/>
            <person name="Urabe I."/>
            <person name="Okada H."/>
        </authorList>
    </citation>
    <scope>NUCLEOTIDE SEQUENCE [GENOMIC DNA]</scope>
    <scope>PROTEIN SEQUENCE OF 1-29</scope>
    <scope>MUTAGENESIS</scope>
    <source>
        <strain>IWG3</strain>
    </source>
</reference>
<reference key="2">
    <citation type="submission" date="1989-03" db="EMBL/GenBank/DDBJ databases">
        <authorList>
            <person name="Urabe I."/>
        </authorList>
    </citation>
    <scope>SEQUENCE REVISION</scope>
</reference>
<reference key="3">
    <citation type="journal article" date="2001" name="J. Biochem.">
        <title>Crystal structure of glucose dehydrogenase from Bacillus megaterium IWG3 at 1.7 A resolution.</title>
        <authorList>
            <person name="Yamamoto K."/>
            <person name="Kurisu G."/>
            <person name="Kusunoki M."/>
            <person name="Tabata S."/>
            <person name="Urabe I."/>
            <person name="Osaki S."/>
        </authorList>
    </citation>
    <scope>X-RAY CRYSTALLOGRAPHY (1.6 ANGSTROMS) IN COMPLEX WITH NAD</scope>
</reference>
<evidence type="ECO:0000250" key="1"/>
<evidence type="ECO:0000269" key="2">
    <source>
    </source>
</evidence>
<evidence type="ECO:0000269" key="3">
    <source>
    </source>
</evidence>
<evidence type="ECO:0000305" key="4"/>
<evidence type="ECO:0007829" key="5">
    <source>
        <dbReference type="PDB" id="1GEE"/>
    </source>
</evidence>
<accession>P40288</accession>
<organism>
    <name type="scientific">Priestia megaterium</name>
    <name type="common">Bacillus megaterium</name>
    <dbReference type="NCBI Taxonomy" id="1404"/>
    <lineage>
        <taxon>Bacteria</taxon>
        <taxon>Bacillati</taxon>
        <taxon>Bacillota</taxon>
        <taxon>Bacilli</taxon>
        <taxon>Bacillales</taxon>
        <taxon>Bacillaceae</taxon>
        <taxon>Priestia</taxon>
    </lineage>
</organism>
<feature type="chain" id="PRO_0000054615" description="Glucose 1-dehydrogenase">
    <location>
        <begin position="1"/>
        <end position="261"/>
    </location>
</feature>
<feature type="active site" description="Proton acceptor">
    <location>
        <position position="158"/>
    </location>
</feature>
<feature type="binding site" evidence="2">
    <location>
        <begin position="11"/>
        <end position="35"/>
    </location>
    <ligand>
        <name>NADP(+)</name>
        <dbReference type="ChEBI" id="CHEBI:58349"/>
    </ligand>
</feature>
<feature type="binding site" evidence="1">
    <location>
        <position position="145"/>
    </location>
    <ligand>
        <name>substrate</name>
    </ligand>
</feature>
<feature type="mutagenesis site" description="Heat stable." evidence="3">
    <original>E</original>
    <variation>A</variation>
    <variation>G</variation>
    <variation>K</variation>
    <location>
        <position position="96"/>
    </location>
</feature>
<feature type="mutagenesis site" description="Heat stable." evidence="3">
    <original>D</original>
    <variation>N</variation>
    <location>
        <position position="108"/>
    </location>
</feature>
<feature type="mutagenesis site" description="Heat stable." evidence="3">
    <original>V</original>
    <variation>A</variation>
    <location>
        <position position="112"/>
    </location>
</feature>
<feature type="mutagenesis site" description="Heat stable." evidence="3">
    <original>E</original>
    <variation>K</variation>
    <location>
        <position position="133"/>
    </location>
</feature>
<feature type="mutagenesis site" description="Heat stable." evidence="3">
    <original>V</original>
    <variation>I</variation>
    <location>
        <position position="183"/>
    </location>
</feature>
<feature type="mutagenesis site" description="Heat stable." evidence="3">
    <original>P</original>
    <variation>Q</variation>
    <location>
        <position position="194"/>
    </location>
</feature>
<feature type="mutagenesis site" description="Heat stable." evidence="3">
    <original>E</original>
    <variation>K</variation>
    <location>
        <position position="210"/>
    </location>
</feature>
<feature type="mutagenesis site" description="Heat stable." evidence="3">
    <original>Y</original>
    <variation>H</variation>
    <location>
        <position position="217"/>
    </location>
</feature>
<feature type="mutagenesis site" description="Heat stable." evidence="3">
    <original>Q</original>
    <variation>L</variation>
    <location>
        <position position="252"/>
    </location>
</feature>
<feature type="mutagenesis site" description="Heat stable." evidence="3">
    <original>Y</original>
    <variation>C</variation>
    <location>
        <position position="253"/>
    </location>
</feature>
<feature type="mutagenesis site" description="Heat stable." evidence="3">
    <original>A</original>
    <variation>G</variation>
    <location>
        <position position="258"/>
    </location>
</feature>
<feature type="helix" evidence="5">
    <location>
        <begin position="3"/>
        <end position="5"/>
    </location>
</feature>
<feature type="strand" evidence="5">
    <location>
        <begin position="9"/>
        <end position="12"/>
    </location>
</feature>
<feature type="helix" evidence="5">
    <location>
        <begin position="18"/>
        <end position="29"/>
    </location>
</feature>
<feature type="strand" evidence="5">
    <location>
        <begin position="33"/>
        <end position="40"/>
    </location>
</feature>
<feature type="helix" evidence="5">
    <location>
        <begin position="42"/>
        <end position="54"/>
    </location>
</feature>
<feature type="strand" evidence="5">
    <location>
        <begin position="58"/>
        <end position="63"/>
    </location>
</feature>
<feature type="helix" evidence="5">
    <location>
        <begin position="69"/>
        <end position="83"/>
    </location>
</feature>
<feature type="strand" evidence="5">
    <location>
        <begin position="88"/>
        <end position="91"/>
    </location>
</feature>
<feature type="helix" evidence="5">
    <location>
        <begin position="101"/>
        <end position="103"/>
    </location>
</feature>
<feature type="helix" evidence="5">
    <location>
        <begin position="106"/>
        <end position="116"/>
    </location>
</feature>
<feature type="helix" evidence="5">
    <location>
        <begin position="118"/>
        <end position="133"/>
    </location>
</feature>
<feature type="strand" evidence="5">
    <location>
        <begin position="139"/>
        <end position="143"/>
    </location>
</feature>
<feature type="helix" evidence="5">
    <location>
        <begin position="146"/>
        <end position="148"/>
    </location>
</feature>
<feature type="helix" evidence="5">
    <location>
        <begin position="156"/>
        <end position="176"/>
    </location>
</feature>
<feature type="helix" evidence="5">
    <location>
        <begin position="177"/>
        <end position="179"/>
    </location>
</feature>
<feature type="strand" evidence="5">
    <location>
        <begin position="182"/>
        <end position="188"/>
    </location>
</feature>
<feature type="helix" evidence="5">
    <location>
        <begin position="194"/>
        <end position="196"/>
    </location>
</feature>
<feature type="helix" evidence="5">
    <location>
        <begin position="197"/>
        <end position="201"/>
    </location>
</feature>
<feature type="helix" evidence="5">
    <location>
        <begin position="203"/>
        <end position="210"/>
    </location>
</feature>
<feature type="helix" evidence="5">
    <location>
        <begin position="221"/>
        <end position="232"/>
    </location>
</feature>
<feature type="helix" evidence="5">
    <location>
        <begin position="234"/>
        <end position="236"/>
    </location>
</feature>
<feature type="strand" evidence="5">
    <location>
        <begin position="243"/>
        <end position="247"/>
    </location>
</feature>
<feature type="helix" evidence="5">
    <location>
        <begin position="250"/>
        <end position="252"/>
    </location>
</feature>
<feature type="helix" evidence="5">
    <location>
        <begin position="254"/>
        <end position="259"/>
    </location>
</feature>
<name>DHG_PRIMG</name>
<sequence length="261" mass="28085">MYKDLEGKVVVITGSSTGLGKSMAIRFATEKAKVVVNYRSKEDEANSVLEEIKKVGGEAIAVKGDVTVESDVINLVQSAIKEFGKLDVMINNAGLENPVSSHEMSLSDWNKVIDTNLTGAFLGSREAIKYFVENDIKGTVINMSSVHEKIPWPLFVHYAASKGGMKLMTETLALEYAPKGIRVNNIGPGAINTPINAEKFADPEQRADVESMIPMGYIGEPEEIAAVAAWLASSEASYVTGITLFADGGMTQYPSFQAGRG</sequence>
<dbReference type="EC" id="1.1.1.47"/>
<dbReference type="EMBL" id="J04805">
    <property type="protein sequence ID" value="AAA22475.1"/>
    <property type="molecule type" value="Genomic_DNA"/>
</dbReference>
<dbReference type="PIR" id="A33528">
    <property type="entry name" value="A33528"/>
</dbReference>
<dbReference type="RefSeq" id="WP_033578120.1">
    <property type="nucleotide sequence ID" value="NZ_VEEA01000001.1"/>
</dbReference>
<dbReference type="PDB" id="1G6K">
    <property type="method" value="X-ray"/>
    <property type="resolution" value="2.00 A"/>
    <property type="chains" value="A/B/E/F=1-261"/>
</dbReference>
<dbReference type="PDB" id="1GCO">
    <property type="method" value="X-ray"/>
    <property type="resolution" value="1.70 A"/>
    <property type="chains" value="A/B/E/F=1-261"/>
</dbReference>
<dbReference type="PDB" id="1GEE">
    <property type="method" value="X-ray"/>
    <property type="resolution" value="1.60 A"/>
    <property type="chains" value="A/B/E/F=1-261"/>
</dbReference>
<dbReference type="PDB" id="1RWB">
    <property type="method" value="X-ray"/>
    <property type="resolution" value="2.00 A"/>
    <property type="chains" value="A/B/E/F=1-261"/>
</dbReference>
<dbReference type="PDBsum" id="1G6K"/>
<dbReference type="PDBsum" id="1GCO"/>
<dbReference type="PDBsum" id="1GEE"/>
<dbReference type="PDBsum" id="1RWB"/>
<dbReference type="SMR" id="P40288"/>
<dbReference type="GeneID" id="48011496"/>
<dbReference type="BRENDA" id="1.1.1.47">
    <property type="organism ID" value="656"/>
</dbReference>
<dbReference type="EvolutionaryTrace" id="P40288"/>
<dbReference type="GO" id="GO:0047934">
    <property type="term" value="F:glucose 1-dehydrogenase (NAD+) activity"/>
    <property type="evidence" value="ECO:0007669"/>
    <property type="project" value="RHEA"/>
</dbReference>
<dbReference type="GO" id="GO:0047935">
    <property type="term" value="F:glucose 1-dehydrogenase (NADP+) activity"/>
    <property type="evidence" value="ECO:0007669"/>
    <property type="project" value="RHEA"/>
</dbReference>
<dbReference type="GO" id="GO:0030435">
    <property type="term" value="P:sporulation resulting in formation of a cellular spore"/>
    <property type="evidence" value="ECO:0007669"/>
    <property type="project" value="UniProtKB-KW"/>
</dbReference>
<dbReference type="CDD" id="cd05358">
    <property type="entry name" value="GlcDH_SDR_c"/>
    <property type="match status" value="1"/>
</dbReference>
<dbReference type="FunFam" id="3.40.50.720:FF:000248">
    <property type="entry name" value="Glucose 1-dehydrogenase"/>
    <property type="match status" value="1"/>
</dbReference>
<dbReference type="Gene3D" id="3.40.50.720">
    <property type="entry name" value="NAD(P)-binding Rossmann-like Domain"/>
    <property type="match status" value="1"/>
</dbReference>
<dbReference type="InterPro" id="IPR036291">
    <property type="entry name" value="NAD(P)-bd_dom_sf"/>
</dbReference>
<dbReference type="InterPro" id="IPR020904">
    <property type="entry name" value="Sc_DH/Rdtase_CS"/>
</dbReference>
<dbReference type="InterPro" id="IPR002347">
    <property type="entry name" value="SDR_fam"/>
</dbReference>
<dbReference type="NCBIfam" id="NF005559">
    <property type="entry name" value="PRK07231.1"/>
    <property type="match status" value="1"/>
</dbReference>
<dbReference type="NCBIfam" id="NF006493">
    <property type="entry name" value="PRK08936.1"/>
    <property type="match status" value="1"/>
</dbReference>
<dbReference type="PANTHER" id="PTHR43639">
    <property type="entry name" value="OXIDOREDUCTASE, SHORT-CHAIN DEHYDROGENASE/REDUCTASE FAMILY (AFU_ORTHOLOGUE AFUA_5G02870)"/>
    <property type="match status" value="1"/>
</dbReference>
<dbReference type="PANTHER" id="PTHR43639:SF1">
    <property type="entry name" value="SHORT-CHAIN DEHYDROGENASE_REDUCTASE FAMILY PROTEIN"/>
    <property type="match status" value="1"/>
</dbReference>
<dbReference type="Pfam" id="PF13561">
    <property type="entry name" value="adh_short_C2"/>
    <property type="match status" value="1"/>
</dbReference>
<dbReference type="PRINTS" id="PR00081">
    <property type="entry name" value="GDHRDH"/>
</dbReference>
<dbReference type="PRINTS" id="PR00080">
    <property type="entry name" value="SDRFAMILY"/>
</dbReference>
<dbReference type="SUPFAM" id="SSF51735">
    <property type="entry name" value="NAD(P)-binding Rossmann-fold domains"/>
    <property type="match status" value="1"/>
</dbReference>
<dbReference type="PROSITE" id="PS00061">
    <property type="entry name" value="ADH_SHORT"/>
    <property type="match status" value="1"/>
</dbReference>